<evidence type="ECO:0000255" key="1">
    <source>
        <dbReference type="HAMAP-Rule" id="MF_00454"/>
    </source>
</evidence>
<comment type="function">
    <text evidence="1">Fluoride-specific ion channel. Important for reducing fluoride concentration in the cell, thus reducing its toxicity.</text>
</comment>
<comment type="catalytic activity">
    <reaction evidence="1">
        <text>fluoride(in) = fluoride(out)</text>
        <dbReference type="Rhea" id="RHEA:76159"/>
        <dbReference type="ChEBI" id="CHEBI:17051"/>
    </reaction>
    <physiologicalReaction direction="left-to-right" evidence="1">
        <dbReference type="Rhea" id="RHEA:76160"/>
    </physiologicalReaction>
</comment>
<comment type="activity regulation">
    <text evidence="1">Na(+) is not transported, but it plays an essential structural role and its presence is essential for fluoride channel function.</text>
</comment>
<comment type="subcellular location">
    <subcellularLocation>
        <location evidence="1">Cell membrane</location>
        <topology evidence="1">Multi-pass membrane protein</topology>
    </subcellularLocation>
</comment>
<comment type="similarity">
    <text evidence="1">Belongs to the fluoride channel Fluc/FEX (TC 1.A.43) family.</text>
</comment>
<gene>
    <name evidence="1" type="primary">fluC1</name>
    <name evidence="1" type="synonym">crcB1</name>
    <name type="ordered locus">SAV1783</name>
</gene>
<proteinExistence type="inferred from homology"/>
<organism>
    <name type="scientific">Staphylococcus aureus (strain Mu50 / ATCC 700699)</name>
    <dbReference type="NCBI Taxonomy" id="158878"/>
    <lineage>
        <taxon>Bacteria</taxon>
        <taxon>Bacillati</taxon>
        <taxon>Bacillota</taxon>
        <taxon>Bacilli</taxon>
        <taxon>Bacillales</taxon>
        <taxon>Staphylococcaceae</taxon>
        <taxon>Staphylococcus</taxon>
    </lineage>
</organism>
<accession>P61382</accession>
<accession>Q99T86</accession>
<feature type="chain" id="PRO_0000110175" description="Fluoride-specific ion channel FluC 1">
    <location>
        <begin position="1"/>
        <end position="147"/>
    </location>
</feature>
<feature type="transmembrane region" description="Helical" evidence="1">
    <location>
        <begin position="29"/>
        <end position="49"/>
    </location>
</feature>
<feature type="transmembrane region" description="Helical" evidence="1">
    <location>
        <begin position="61"/>
        <end position="81"/>
    </location>
</feature>
<feature type="transmembrane region" description="Helical" evidence="1">
    <location>
        <begin position="90"/>
        <end position="110"/>
    </location>
</feature>
<feature type="transmembrane region" description="Helical" evidence="1">
    <location>
        <begin position="118"/>
        <end position="138"/>
    </location>
</feature>
<feature type="binding site" evidence="1">
    <location>
        <position position="97"/>
    </location>
    <ligand>
        <name>Na(+)</name>
        <dbReference type="ChEBI" id="CHEBI:29101"/>
        <note>structural</note>
    </ligand>
</feature>
<feature type="binding site" evidence="1">
    <location>
        <position position="100"/>
    </location>
    <ligand>
        <name>Na(+)</name>
        <dbReference type="ChEBI" id="CHEBI:29101"/>
        <note>structural</note>
    </ligand>
</feature>
<dbReference type="EMBL" id="BA000017">
    <property type="protein sequence ID" value="BAB57945.1"/>
    <property type="molecule type" value="Genomic_DNA"/>
</dbReference>
<dbReference type="SMR" id="P61382"/>
<dbReference type="KEGG" id="sav:SAV1783"/>
<dbReference type="HOGENOM" id="CLU_114342_3_2_9"/>
<dbReference type="PhylomeDB" id="P61382"/>
<dbReference type="Proteomes" id="UP000002481">
    <property type="component" value="Chromosome"/>
</dbReference>
<dbReference type="GO" id="GO:0005886">
    <property type="term" value="C:plasma membrane"/>
    <property type="evidence" value="ECO:0007669"/>
    <property type="project" value="UniProtKB-SubCell"/>
</dbReference>
<dbReference type="GO" id="GO:0062054">
    <property type="term" value="F:fluoride channel activity"/>
    <property type="evidence" value="ECO:0007669"/>
    <property type="project" value="UniProtKB-UniRule"/>
</dbReference>
<dbReference type="GO" id="GO:0046872">
    <property type="term" value="F:metal ion binding"/>
    <property type="evidence" value="ECO:0007669"/>
    <property type="project" value="UniProtKB-KW"/>
</dbReference>
<dbReference type="GO" id="GO:0140114">
    <property type="term" value="P:cellular detoxification of fluoride"/>
    <property type="evidence" value="ECO:0007669"/>
    <property type="project" value="UniProtKB-UniRule"/>
</dbReference>
<dbReference type="HAMAP" id="MF_00454">
    <property type="entry name" value="FluC"/>
    <property type="match status" value="1"/>
</dbReference>
<dbReference type="InterPro" id="IPR003691">
    <property type="entry name" value="FluC"/>
</dbReference>
<dbReference type="NCBIfam" id="TIGR00494">
    <property type="entry name" value="crcB"/>
    <property type="match status" value="1"/>
</dbReference>
<dbReference type="NCBIfam" id="NF010797">
    <property type="entry name" value="PRK14201.1"/>
    <property type="match status" value="1"/>
</dbReference>
<dbReference type="PANTHER" id="PTHR28259">
    <property type="entry name" value="FLUORIDE EXPORT PROTEIN 1-RELATED"/>
    <property type="match status" value="1"/>
</dbReference>
<dbReference type="PANTHER" id="PTHR28259:SF16">
    <property type="entry name" value="FLUORIDE-SPECIFIC ION CHANNEL FLUC 2"/>
    <property type="match status" value="1"/>
</dbReference>
<dbReference type="Pfam" id="PF02537">
    <property type="entry name" value="CRCB"/>
    <property type="match status" value="1"/>
</dbReference>
<sequence>MHRQFLSSCCQNLFFKFKLLLFEVNQMQYVYIFIGGALGALLRYLISFLNTDGGFPIGTLIANLTGAFVMGLLTALTIAFFSNHPTLKKAITTGFLGALTTFSTFQLELIHMFDHQQFITLLLYAVTSYVFGILLCYVGIKLGGGLS</sequence>
<protein>
    <recommendedName>
        <fullName evidence="1">Fluoride-specific ion channel FluC 1</fullName>
    </recommendedName>
</protein>
<reference key="1">
    <citation type="journal article" date="2001" name="Lancet">
        <title>Whole genome sequencing of meticillin-resistant Staphylococcus aureus.</title>
        <authorList>
            <person name="Kuroda M."/>
            <person name="Ohta T."/>
            <person name="Uchiyama I."/>
            <person name="Baba T."/>
            <person name="Yuzawa H."/>
            <person name="Kobayashi I."/>
            <person name="Cui L."/>
            <person name="Oguchi A."/>
            <person name="Aoki K."/>
            <person name="Nagai Y."/>
            <person name="Lian J.-Q."/>
            <person name="Ito T."/>
            <person name="Kanamori M."/>
            <person name="Matsumaru H."/>
            <person name="Maruyama A."/>
            <person name="Murakami H."/>
            <person name="Hosoyama A."/>
            <person name="Mizutani-Ui Y."/>
            <person name="Takahashi N.K."/>
            <person name="Sawano T."/>
            <person name="Inoue R."/>
            <person name="Kaito C."/>
            <person name="Sekimizu K."/>
            <person name="Hirakawa H."/>
            <person name="Kuhara S."/>
            <person name="Goto S."/>
            <person name="Yabuzaki J."/>
            <person name="Kanehisa M."/>
            <person name="Yamashita A."/>
            <person name="Oshima K."/>
            <person name="Furuya K."/>
            <person name="Yoshino C."/>
            <person name="Shiba T."/>
            <person name="Hattori M."/>
            <person name="Ogasawara N."/>
            <person name="Hayashi H."/>
            <person name="Hiramatsu K."/>
        </authorList>
    </citation>
    <scope>NUCLEOTIDE SEQUENCE [LARGE SCALE GENOMIC DNA]</scope>
    <source>
        <strain>Mu50 / ATCC 700699</strain>
    </source>
</reference>
<name>FLUC1_STAAM</name>
<keyword id="KW-1003">Cell membrane</keyword>
<keyword id="KW-0407">Ion channel</keyword>
<keyword id="KW-0406">Ion transport</keyword>
<keyword id="KW-0472">Membrane</keyword>
<keyword id="KW-0479">Metal-binding</keyword>
<keyword id="KW-0915">Sodium</keyword>
<keyword id="KW-0812">Transmembrane</keyword>
<keyword id="KW-1133">Transmembrane helix</keyword>
<keyword id="KW-0813">Transport</keyword>